<reference key="1">
    <citation type="journal article" date="2002" name="Nat. Genet.">
        <title>Genome sequence of the endocellular obligate symbiont of tsetse flies, Wigglesworthia glossinidia.</title>
        <authorList>
            <person name="Akman L."/>
            <person name="Yamashita A."/>
            <person name="Watanabe H."/>
            <person name="Oshima K."/>
            <person name="Shiba T."/>
            <person name="Hattori M."/>
            <person name="Aksoy S."/>
        </authorList>
    </citation>
    <scope>NUCLEOTIDE SEQUENCE [LARGE SCALE GENOMIC DNA]</scope>
</reference>
<dbReference type="EMBL" id="BA000021">
    <property type="protein sequence ID" value="BAC24698.1"/>
    <property type="molecule type" value="Genomic_DNA"/>
</dbReference>
<dbReference type="SMR" id="Q8D203"/>
<dbReference type="STRING" id="36870.gene:10369061"/>
<dbReference type="KEGG" id="wbr:rpsQ"/>
<dbReference type="eggNOG" id="COG0186">
    <property type="taxonomic scope" value="Bacteria"/>
</dbReference>
<dbReference type="HOGENOM" id="CLU_073626_1_1_6"/>
<dbReference type="Proteomes" id="UP000000562">
    <property type="component" value="Chromosome"/>
</dbReference>
<dbReference type="GO" id="GO:0022627">
    <property type="term" value="C:cytosolic small ribosomal subunit"/>
    <property type="evidence" value="ECO:0007669"/>
    <property type="project" value="TreeGrafter"/>
</dbReference>
<dbReference type="GO" id="GO:0019843">
    <property type="term" value="F:rRNA binding"/>
    <property type="evidence" value="ECO:0007669"/>
    <property type="project" value="UniProtKB-UniRule"/>
</dbReference>
<dbReference type="GO" id="GO:0003735">
    <property type="term" value="F:structural constituent of ribosome"/>
    <property type="evidence" value="ECO:0007669"/>
    <property type="project" value="InterPro"/>
</dbReference>
<dbReference type="GO" id="GO:0006412">
    <property type="term" value="P:translation"/>
    <property type="evidence" value="ECO:0007669"/>
    <property type="project" value="UniProtKB-UniRule"/>
</dbReference>
<dbReference type="CDD" id="cd00364">
    <property type="entry name" value="Ribosomal_uS17"/>
    <property type="match status" value="1"/>
</dbReference>
<dbReference type="Gene3D" id="2.40.50.140">
    <property type="entry name" value="Nucleic acid-binding proteins"/>
    <property type="match status" value="1"/>
</dbReference>
<dbReference type="HAMAP" id="MF_01345_B">
    <property type="entry name" value="Ribosomal_uS17_B"/>
    <property type="match status" value="1"/>
</dbReference>
<dbReference type="InterPro" id="IPR012340">
    <property type="entry name" value="NA-bd_OB-fold"/>
</dbReference>
<dbReference type="InterPro" id="IPR000266">
    <property type="entry name" value="Ribosomal_uS17"/>
</dbReference>
<dbReference type="InterPro" id="IPR019984">
    <property type="entry name" value="Ribosomal_uS17_bact/chlr"/>
</dbReference>
<dbReference type="InterPro" id="IPR019979">
    <property type="entry name" value="Ribosomal_uS17_CS"/>
</dbReference>
<dbReference type="NCBIfam" id="NF004123">
    <property type="entry name" value="PRK05610.1"/>
    <property type="match status" value="1"/>
</dbReference>
<dbReference type="NCBIfam" id="TIGR03635">
    <property type="entry name" value="uS17_bact"/>
    <property type="match status" value="1"/>
</dbReference>
<dbReference type="PANTHER" id="PTHR10744">
    <property type="entry name" value="40S RIBOSOMAL PROTEIN S11 FAMILY MEMBER"/>
    <property type="match status" value="1"/>
</dbReference>
<dbReference type="PANTHER" id="PTHR10744:SF1">
    <property type="entry name" value="SMALL RIBOSOMAL SUBUNIT PROTEIN US17M"/>
    <property type="match status" value="1"/>
</dbReference>
<dbReference type="Pfam" id="PF00366">
    <property type="entry name" value="Ribosomal_S17"/>
    <property type="match status" value="1"/>
</dbReference>
<dbReference type="PRINTS" id="PR00973">
    <property type="entry name" value="RIBOSOMALS17"/>
</dbReference>
<dbReference type="SUPFAM" id="SSF50249">
    <property type="entry name" value="Nucleic acid-binding proteins"/>
    <property type="match status" value="1"/>
</dbReference>
<dbReference type="PROSITE" id="PS00056">
    <property type="entry name" value="RIBOSOMAL_S17"/>
    <property type="match status" value="1"/>
</dbReference>
<proteinExistence type="inferred from homology"/>
<gene>
    <name evidence="1" type="primary">rpsQ</name>
    <name type="ordered locus">WIGBR5520</name>
</gene>
<organism>
    <name type="scientific">Wigglesworthia glossinidia brevipalpis</name>
    <dbReference type="NCBI Taxonomy" id="36870"/>
    <lineage>
        <taxon>Bacteria</taxon>
        <taxon>Pseudomonadati</taxon>
        <taxon>Pseudomonadota</taxon>
        <taxon>Gammaproteobacteria</taxon>
        <taxon>Enterobacterales</taxon>
        <taxon>Erwiniaceae</taxon>
        <taxon>Wigglesworthia</taxon>
    </lineage>
</organism>
<sequence length="92" mass="10760">MKKKKVEIIMGKKKLQILKGSVIKNKMQKSIVVSVERFVKHPIYKKFMKKTTKLHVHDENNSSKVGDVVEIQECRPISKTKSWKLINIKKNN</sequence>
<protein>
    <recommendedName>
        <fullName evidence="1">Small ribosomal subunit protein uS17</fullName>
    </recommendedName>
    <alternativeName>
        <fullName evidence="2">30S ribosomal protein S17</fullName>
    </alternativeName>
</protein>
<keyword id="KW-1185">Reference proteome</keyword>
<keyword id="KW-0687">Ribonucleoprotein</keyword>
<keyword id="KW-0689">Ribosomal protein</keyword>
<keyword id="KW-0694">RNA-binding</keyword>
<keyword id="KW-0699">rRNA-binding</keyword>
<feature type="chain" id="PRO_0000233608" description="Small ribosomal subunit protein uS17">
    <location>
        <begin position="1"/>
        <end position="92"/>
    </location>
</feature>
<evidence type="ECO:0000255" key="1">
    <source>
        <dbReference type="HAMAP-Rule" id="MF_01345"/>
    </source>
</evidence>
<evidence type="ECO:0000305" key="2"/>
<comment type="function">
    <text evidence="1">One of the primary rRNA binding proteins, it binds specifically to the 5'-end of 16S ribosomal RNA.</text>
</comment>
<comment type="subunit">
    <text evidence="1">Part of the 30S ribosomal subunit.</text>
</comment>
<comment type="similarity">
    <text evidence="1">Belongs to the universal ribosomal protein uS17 family.</text>
</comment>
<accession>Q8D203</accession>
<name>RS17_WIGBR</name>